<sequence>MDEFELFQQLNQTAPLVKTEEPEVPDEFQQANNNQSAPLRTGLSDLSHEIAAAKQREEEEAQRLADFMQKDMKEPAVKRKRGSEEYKKDPLESKAPLSTFGHSSRPRRSVNYASIERGDEAQAQSLVTDFGSRGNRKKPKRTRDELDENYMEENEGNSGRKKKPNAKGASRQFQVPGLPTYASQYSRPPKQEDVFKTIVPLAEDARAEGERVIGFRLDSQPAVRRASGGFRRFCAWLSDNQIFSIMQTVDKLCIVGANNEDHDEILLKSIRHVYNAMPPTFRRDWEYAARKDVFDSRLFVQNMPMPLSEISVTDPRHPPSPIARGTTVRPNCCENQPLFLNMCETIEHYLGHHDVVHLFGCDICYRVYPSRYELTKHDCKEFAEYLRQLTFKQQTLHLEAAYMYLCCSQCGLWLSVKPSGEGKKGWTYFATALMNHSCQPLVPVVAYFPKPLKDEGKGIRIQFQVMSELNIGLPLSCSECNIEEFHSVVEIEEHFKEKHEANHTCIKCGKTFGTEFMLKHHAQSHTTQTAQFANYLQMSATYQPPPSSGRLPYVGFGSSIPAIGGLTSGEVQALEASENKKSEFVEPDEYTIRKKLLRWKHAKTKKENRNITDSNEKEFSYEPGESSGEEDFQKSLLEQDNQSSSSSDSDSDSDDFTSSKQKKKRNIKIRGDLGYEHINRNKFFERPESEKEARKRIEKVYKKHVLLSRERLLDPEEALRILEESRMVHLNSIQSTLADDIAMSCIRTISLPASNCIDPLKDLLLVNKIFYFCTKCNYIFSKDPVVHCLSCEVTEDDLIEVYHAASGPHAGVRCIDPECKAHLCSVISLKTHLSDVHSKQATLELVSGELDNFSENRFDRSLMLMAKHFTQLQFDERTYLARFTDIECFMPFSGLLEAKDQPRPMPIRQQPQQIKPAYSLVRPDIIAPNELMRPYTLTPAIRPGQRIKPYKVPRTSRWYSCSWCDREYESLNQFVDHLTRFHTHPCPSCGKAFSSQNTRRTHVCSRLFAEIKGRGATLCGQCPSCPEIHQVERIFVHMLNRHFSTIEYVLATGELLPPARDVGIRYNHGENGGYGRSYESLRAIEQSVVDPRSPDYRLKQVKISALPIHGVELNRLPARDPPMGSFTVCPPKDKNIDPRLMCYMCELTFDSYDELTHHMDDHPEKWANCPFCAANTPTHFDLQKHLIQEHVVQISGQACCAFCQEHHRFMSSHILFRCKRVSRCTICGVKSNDPLANRVHIQRSHALTLRRFQCAYCIKVFVSVGEYYEHECASGGGRVYSCTCSPNKFFNSPIEFCDHFDSVHILRNKCQLCSYDAPSQDGMVKHRKTHMRSGCPKEQTKKLFILMKCLFPKHNSGYMRFIEGGPVPASYQDVDRSQMNYLMCNMGTVSPSCHKSYAQAPRTLLEALEGVASDSRSGGLQKVVNVTTRMNEPSSSDVIMLSDDEDDDCVVFEKAVPNGVAQGSSTSTPNPESSINCEVRVETSQAGYGGAQQPGYVDEDDTDLEVAQGGKSPYGEPVVKEVVDENGDDELAVVAEVENSTGTLPSSISAGREKKFKCQKCSLAFYTNGSLESHMRDHRQDAGAQLCTETYGIPVVTKASWLCRNCCVVFENQPKYQKHMAIHGDTCLTCIHCSGIAFNHTAIQNHMKSHEEKKVRYSCGTCLCTFASDLALFDHLSVAHGVSLYYFCKVCGFGSTSADSVFQHISIHNGHNYSLVQRFGACPAQLLNYDPTDELEFRSQILNKTIQLVSPSDCSHRSMLLQCETVVSCKTCHCTQAWFNYMAFNNHSEETGFPQFKNVDLANDYRRDFPLSRHLNERNALSMSQFGNAKHGSANHSHGQAQPNKRTFRHEVPYRTAAPRSSLQTNGSSMGSVTTNGGRVVRPSPPNSMNVTLRRAPPQQAPPRRIVIANSAPNNTNVLRNHVAVTTKCQFKDCDKVLHSEFDRQLHSMHSSNSSWFCRQCGHSPKSEIDLFLHYIQVHLKPAYDKHQSNSFKSNVFHLKCPIRSCTSPEFQSPKAFEKHMRTAHAAELPFEASCCDARFASKALCVKHDQEHASFLDSNGTDASCCPICGSLSMWSLPKDPHTDCLQSHIIRHGLDYRSSCRQCLKQFPADVNQDQVIAHILDTHGMSMHGNTFHCNLCTTGTKTVEEFAEHCRKAHVFHILVKSSHSTRGELVVTTGQEYENYVGLKSVTRASLNSISSQRASNAGETAQPSVLCAGSGNAALLTIAAAIGEPETSNNTAEVLTLD</sequence>
<evidence type="ECO:0000255" key="1">
    <source>
        <dbReference type="PROSITE-ProRule" id="PRU00042"/>
    </source>
</evidence>
<evidence type="ECO:0000256" key="2">
    <source>
        <dbReference type="SAM" id="MobiDB-lite"/>
    </source>
</evidence>
<evidence type="ECO:0000269" key="3">
    <source>
    </source>
</evidence>
<evidence type="ECO:0000269" key="4">
    <source>
    </source>
</evidence>
<evidence type="ECO:0000269" key="5">
    <source>
    </source>
</evidence>
<protein>
    <recommendedName>
        <fullName>Zinc finger protein lin-13</fullName>
    </recommendedName>
    <alternativeName>
        <fullName>Abnormal cell lineage protein 13</fullName>
    </alternativeName>
</protein>
<dbReference type="EMBL" id="AF245435">
    <property type="protein sequence ID" value="AAF87497.1"/>
    <property type="molecule type" value="mRNA"/>
</dbReference>
<dbReference type="EMBL" id="FO080307">
    <property type="protein sequence ID" value="CCD62760.1"/>
    <property type="molecule type" value="Genomic_DNA"/>
</dbReference>
<dbReference type="PIR" id="T15390">
    <property type="entry name" value="T15390"/>
</dbReference>
<dbReference type="RefSeq" id="NP_498678.3">
    <property type="nucleotide sequence ID" value="NM_066277.4"/>
</dbReference>
<dbReference type="BioGRID" id="41291">
    <property type="interactions" value="10"/>
</dbReference>
<dbReference type="FunCoup" id="Q11107">
    <property type="interactions" value="980"/>
</dbReference>
<dbReference type="STRING" id="6239.C03B8.4.1"/>
<dbReference type="iPTMnet" id="Q11107"/>
<dbReference type="PaxDb" id="6239-C03B8.4"/>
<dbReference type="PeptideAtlas" id="Q11107"/>
<dbReference type="EnsemblMetazoa" id="C03B8.4.1">
    <property type="protein sequence ID" value="C03B8.4.1"/>
    <property type="gene ID" value="WBGene00003002"/>
</dbReference>
<dbReference type="GeneID" id="176083"/>
<dbReference type="KEGG" id="cel:CELE_C03B8.4"/>
<dbReference type="UCSC" id="C03B8.4">
    <property type="organism name" value="c. elegans"/>
</dbReference>
<dbReference type="AGR" id="WB:WBGene00003002"/>
<dbReference type="CTD" id="176083"/>
<dbReference type="WormBase" id="C03B8.4">
    <property type="protein sequence ID" value="CE30419"/>
    <property type="gene ID" value="WBGene00003002"/>
    <property type="gene designation" value="lin-13"/>
</dbReference>
<dbReference type="eggNOG" id="KOG1721">
    <property type="taxonomic scope" value="Eukaryota"/>
</dbReference>
<dbReference type="HOGENOM" id="CLU_001170_0_0_1"/>
<dbReference type="InParanoid" id="Q11107"/>
<dbReference type="OMA" id="SFKSPEC"/>
<dbReference type="OrthoDB" id="5805083at2759"/>
<dbReference type="PhylomeDB" id="Q11107"/>
<dbReference type="PRO" id="PR:Q11107"/>
<dbReference type="Proteomes" id="UP000001940">
    <property type="component" value="Chromosome III"/>
</dbReference>
<dbReference type="Bgee" id="WBGene00003002">
    <property type="expression patterns" value="Expressed in germ line (C elegans) and 4 other cell types or tissues"/>
</dbReference>
<dbReference type="GO" id="GO:0005634">
    <property type="term" value="C:nucleus"/>
    <property type="evidence" value="ECO:0000314"/>
    <property type="project" value="UniProtKB"/>
</dbReference>
<dbReference type="GO" id="GO:0003677">
    <property type="term" value="F:DNA binding"/>
    <property type="evidence" value="ECO:0007669"/>
    <property type="project" value="UniProtKB-KW"/>
</dbReference>
<dbReference type="GO" id="GO:0008270">
    <property type="term" value="F:zinc ion binding"/>
    <property type="evidence" value="ECO:0007669"/>
    <property type="project" value="UniProtKB-KW"/>
</dbReference>
<dbReference type="GO" id="GO:0040027">
    <property type="term" value="P:negative regulation of vulval development"/>
    <property type="evidence" value="ECO:0000315"/>
    <property type="project" value="UniProtKB"/>
</dbReference>
<dbReference type="GO" id="GO:0045944">
    <property type="term" value="P:positive regulation of transcription by RNA polymerase II"/>
    <property type="evidence" value="ECO:0000318"/>
    <property type="project" value="GO_Central"/>
</dbReference>
<dbReference type="GO" id="GO:0022414">
    <property type="term" value="P:reproductive process"/>
    <property type="evidence" value="ECO:0000316"/>
    <property type="project" value="WormBase"/>
</dbReference>
<dbReference type="Gene3D" id="3.30.160.60">
    <property type="entry name" value="Classic Zinc Finger"/>
    <property type="match status" value="2"/>
</dbReference>
<dbReference type="InterPro" id="IPR036236">
    <property type="entry name" value="Znf_C2H2_sf"/>
</dbReference>
<dbReference type="InterPro" id="IPR013087">
    <property type="entry name" value="Znf_C2H2_type"/>
</dbReference>
<dbReference type="PANTHER" id="PTHR24379:SF121">
    <property type="entry name" value="C2H2-TYPE DOMAIN-CONTAINING PROTEIN"/>
    <property type="match status" value="1"/>
</dbReference>
<dbReference type="PANTHER" id="PTHR24379">
    <property type="entry name" value="KRAB AND ZINC FINGER DOMAIN-CONTAINING"/>
    <property type="match status" value="1"/>
</dbReference>
<dbReference type="SMART" id="SM00355">
    <property type="entry name" value="ZnF_C2H2"/>
    <property type="match status" value="22"/>
</dbReference>
<dbReference type="SUPFAM" id="SSF57667">
    <property type="entry name" value="beta-beta-alpha zinc fingers"/>
    <property type="match status" value="1"/>
</dbReference>
<dbReference type="PROSITE" id="PS00028">
    <property type="entry name" value="ZINC_FINGER_C2H2_1"/>
    <property type="match status" value="7"/>
</dbReference>
<dbReference type="PROSITE" id="PS50157">
    <property type="entry name" value="ZINC_FINGER_C2H2_2"/>
    <property type="match status" value="4"/>
</dbReference>
<organism>
    <name type="scientific">Caenorhabditis elegans</name>
    <dbReference type="NCBI Taxonomy" id="6239"/>
    <lineage>
        <taxon>Eukaryota</taxon>
        <taxon>Metazoa</taxon>
        <taxon>Ecdysozoa</taxon>
        <taxon>Nematoda</taxon>
        <taxon>Chromadorea</taxon>
        <taxon>Rhabditida</taxon>
        <taxon>Rhabditina</taxon>
        <taxon>Rhabditomorpha</taxon>
        <taxon>Rhabditoidea</taxon>
        <taxon>Rhabditidae</taxon>
        <taxon>Peloderinae</taxon>
        <taxon>Caenorhabditis</taxon>
    </lineage>
</organism>
<accession>Q11107</accession>
<accession>Q9NBV2</accession>
<keyword id="KW-0217">Developmental protein</keyword>
<keyword id="KW-0238">DNA-binding</keyword>
<keyword id="KW-0479">Metal-binding</keyword>
<keyword id="KW-0539">Nucleus</keyword>
<keyword id="KW-1185">Reference proteome</keyword>
<keyword id="KW-0677">Repeat</keyword>
<keyword id="KW-0862">Zinc</keyword>
<keyword id="KW-0863">Zinc-finger</keyword>
<gene>
    <name type="primary">lin-13</name>
    <name type="ORF">C03B8.4</name>
</gene>
<comment type="function">
    <text evidence="3 4 5">Involved in repression of vulval fate, possibly by a tumor suppressor protein Rb-mediated mechanism (PubMed:10880475, PubMed:16890929). May act in a common pathway with retinoblastoma-like protein homolog lin-35 and hpl-2 to influence the ER stress response in the intestine (PubMed:24715729). Plays a role in recruiting chromobox protein homolog hpl-2 to specific chromatin sites (PubMed:16890929).</text>
</comment>
<comment type="subunit">
    <text evidence="4">Interacts (via PLVPV motif) with chromobox protein homolog hpl-2 (via chromo (shadow subtype) domain); the interaction is direct and influences localization of hpl-2 to nuclear foci.</text>
</comment>
<comment type="subcellular location">
    <subcellularLocation>
        <location evidence="3 4">Nucleus</location>
    </subcellularLocation>
    <text evidence="4">Localization to nuclear foci overlaps partially with chromobox protein homolog hpl-2.</text>
</comment>
<comment type="tissue specificity">
    <text evidence="3">In the L3 stage, expressed in syncytial hypodermal cell 7, body wall muscles, intestinal cells, distal tip cells and many neurons.</text>
</comment>
<comment type="developmental stage">
    <text evidence="3">Expressed both maternally and zygotically.</text>
</comment>
<comment type="disruption phenotype">
    <text evidence="3 4">RNAi-mediated knockdown causes various defects, including sterility, multiple vulvae, protruding vulva and arrested larvae (PubMed:10880475). Abolishes many hpl-2 nuclear foci (PubMed:16890929). Causes ectopic up-regulation of transcription of specific genes, such as lin-39 and lag-2 (PubMed:16890929).</text>
</comment>
<name>LIN13_CAEEL</name>
<reference key="1">
    <citation type="journal article" date="2000" name="Genetics">
        <title>Caenorhabditis elegans lin-13, a member of the LIN-35 Rb class of genes involved in vulval development, encodes a protein with zinc fingers and an LXCXE motif.</title>
        <authorList>
            <person name="Melendez A."/>
            <person name="Greenwald I."/>
        </authorList>
    </citation>
    <scope>NUCLEOTIDE SEQUENCE [MRNA]</scope>
    <scope>FUNCTION</scope>
    <scope>SUBCELLULAR LOCATION</scope>
    <scope>DEVELOPMENTAL STAGE</scope>
    <scope>TISSUE SPECIFICITY</scope>
    <scope>DISRUPTION PHENOTYPE</scope>
    <scope>MUTAGENESIS OF 524-SER--ASP-2248 AND 857-ARG--ASP-2248</scope>
</reference>
<reference key="2">
    <citation type="journal article" date="1998" name="Science">
        <title>Genome sequence of the nematode C. elegans: a platform for investigating biology.</title>
        <authorList>
            <consortium name="The C. elegans sequencing consortium"/>
        </authorList>
    </citation>
    <scope>NUCLEOTIDE SEQUENCE [LARGE SCALE GENOMIC DNA]</scope>
    <source>
        <strain>Bristol N2</strain>
    </source>
</reference>
<reference key="3">
    <citation type="journal article" date="2006" name="Dev. Biol.">
        <title>The C. elegans HP1 homologue HPL-2 and the LIN-13 zinc finger protein form a complex implicated in vulval development.</title>
        <authorList>
            <person name="Coustham V."/>
            <person name="Bedet C."/>
            <person name="Monier K."/>
            <person name="Schott S."/>
            <person name="Karali M."/>
            <person name="Palladino F."/>
        </authorList>
    </citation>
    <scope>FUNCTION</scope>
    <scope>INTERACTION WITH HPL-2</scope>
    <scope>SUBCELLULAR LOCATION</scope>
    <scope>DISRUPTION PHENOTYPE</scope>
    <scope>MUTAGENESIS OF VAL-442 AND VAL-444</scope>
</reference>
<reference key="4">
    <citation type="journal article" date="2014" name="Proc. Natl. Acad. Sci. U.S.A.">
        <title>The Caenorhabditis elegans HP1 family protein HPL-2 maintains ER homeostasis through the UPR and hormesis.</title>
        <authorList>
            <person name="Kozlowski L."/>
            <person name="Garvis S."/>
            <person name="Bedet C."/>
            <person name="Palladino F."/>
        </authorList>
    </citation>
    <scope>FUNCTION</scope>
    <scope>MUTAGENESIS OF 857-ARG--ASP-2248</scope>
</reference>
<feature type="chain" id="PRO_0000046888" description="Zinc finger protein lin-13">
    <location>
        <begin position="1"/>
        <end position="2248"/>
    </location>
</feature>
<feature type="zinc finger region" description="C2H2-type 1" evidence="1">
    <location>
        <begin position="503"/>
        <end position="525"/>
    </location>
</feature>
<feature type="zinc finger region" description="C2H2-type 2" evidence="1">
    <location>
        <begin position="812"/>
        <end position="837"/>
    </location>
</feature>
<feature type="zinc finger region" description="C2H2-type 3" evidence="1">
    <location>
        <begin position="959"/>
        <end position="982"/>
    </location>
</feature>
<feature type="zinc finger region" description="C2H2-type 4" evidence="1">
    <location>
        <begin position="1140"/>
        <end position="1162"/>
    </location>
</feature>
<feature type="zinc finger region" description="C2H2-type 5" evidence="1">
    <location>
        <begin position="1556"/>
        <end position="1578"/>
    </location>
</feature>
<feature type="zinc finger region" description="C2H2-type 6" evidence="1">
    <location>
        <begin position="1601"/>
        <end position="1623"/>
    </location>
</feature>
<feature type="zinc finger region" description="C2H2-type 7" evidence="1">
    <location>
        <begin position="1657"/>
        <end position="1680"/>
    </location>
</feature>
<feature type="region of interest" description="Disordered" evidence="2">
    <location>
        <begin position="1"/>
        <end position="189"/>
    </location>
</feature>
<feature type="region of interest" description="Disordered" evidence="2">
    <location>
        <begin position="603"/>
        <end position="665"/>
    </location>
</feature>
<feature type="region of interest" description="Disordered" evidence="2">
    <location>
        <begin position="1859"/>
        <end position="1900"/>
    </location>
</feature>
<feature type="short sequence motif" description="Required for interaction with hpl-2 isoform a" evidence="4">
    <location>
        <begin position="440"/>
        <end position="444"/>
    </location>
</feature>
<feature type="compositionally biased region" description="Polar residues" evidence="2">
    <location>
        <begin position="29"/>
        <end position="38"/>
    </location>
</feature>
<feature type="compositionally biased region" description="Basic and acidic residues" evidence="2">
    <location>
        <begin position="54"/>
        <end position="92"/>
    </location>
</feature>
<feature type="compositionally biased region" description="Acidic residues" evidence="2">
    <location>
        <begin position="145"/>
        <end position="155"/>
    </location>
</feature>
<feature type="compositionally biased region" description="Basic and acidic residues" evidence="2">
    <location>
        <begin position="605"/>
        <end position="620"/>
    </location>
</feature>
<feature type="compositionally biased region" description="Polar residues" evidence="2">
    <location>
        <begin position="1859"/>
        <end position="1877"/>
    </location>
</feature>
<feature type="mutagenesis site" description="Abolishes interaction with hpl-2." evidence="4">
    <original>VPV</original>
    <variation>DPE</variation>
    <location>
        <begin position="442"/>
        <end position="444"/>
    </location>
</feature>
<feature type="mutagenesis site" description="In n387; defects in vulval developmental. Multiple vulvae in different genetic backgrounds, either with lin-8, or lin-15, or lin-38 mutants, when grown at 15 degrees Celsius." evidence="3">
    <location>
        <begin position="524"/>
        <end position="2248"/>
    </location>
</feature>
<feature type="mutagenesis site" description="In n388; defects in vulval developmental. Increased resistance to ER stress." evidence="3 5">
    <location>
        <begin position="857"/>
        <end position="2248"/>
    </location>
</feature>
<proteinExistence type="evidence at protein level"/>